<feature type="chain" id="PRO_0000381352" description="Biotin synthase">
    <location>
        <begin position="1"/>
        <end position="364"/>
    </location>
</feature>
<feature type="domain" description="Radical SAM core" evidence="2">
    <location>
        <begin position="70"/>
        <end position="308"/>
    </location>
</feature>
<feature type="region of interest" description="Disordered" evidence="3">
    <location>
        <begin position="14"/>
        <end position="36"/>
    </location>
</feature>
<feature type="binding site" evidence="1">
    <location>
        <position position="88"/>
    </location>
    <ligand>
        <name>[4Fe-4S] cluster</name>
        <dbReference type="ChEBI" id="CHEBI:49883"/>
        <note>4Fe-4S-S-AdoMet</note>
    </ligand>
</feature>
<feature type="binding site" evidence="1">
    <location>
        <position position="92"/>
    </location>
    <ligand>
        <name>[4Fe-4S] cluster</name>
        <dbReference type="ChEBI" id="CHEBI:49883"/>
        <note>4Fe-4S-S-AdoMet</note>
    </ligand>
</feature>
<feature type="binding site" evidence="1">
    <location>
        <position position="95"/>
    </location>
    <ligand>
        <name>[4Fe-4S] cluster</name>
        <dbReference type="ChEBI" id="CHEBI:49883"/>
        <note>4Fe-4S-S-AdoMet</note>
    </ligand>
</feature>
<feature type="binding site" evidence="1">
    <location>
        <position position="164"/>
    </location>
    <ligand>
        <name>[2Fe-2S] cluster</name>
        <dbReference type="ChEBI" id="CHEBI:190135"/>
    </ligand>
</feature>
<feature type="binding site" evidence="1">
    <location>
        <position position="233"/>
    </location>
    <ligand>
        <name>[2Fe-2S] cluster</name>
        <dbReference type="ChEBI" id="CHEBI:190135"/>
    </ligand>
</feature>
<sequence>MNPLLERLCARLSDTIPPGTETPYASPSHARTEEAPWSGITGEEALAVARLPASDILDILAVAQAVRSARKGPLATTCGIVNAKSGRCGEDCAFCAQSSHHDTGAPVHALLGPDALLRHAEELARAGVRRFGIVTSGNALSEREFDAVCHAARLLRDRVDIGLCASLGQLATGSAESGNRGERARRLKDAGISSYHHNLETARSFFPQVCTTHPYDDDIATVREAARAGLRTCCGGILGLGETWEHRVELALTLRELDVDSIPLNFLHPVPGTRLGHRSPLPPMEALRAIAVFRLLHPQRDILVCGGRETTLGQWQSWVFAAGANGLMVGNYLTTAGRALAEDMEMLAALGVGEIPRNGEEARA</sequence>
<name>BIOB_NITV9</name>
<dbReference type="EC" id="2.8.1.6" evidence="1"/>
<dbReference type="EMBL" id="CP001197">
    <property type="protein sequence ID" value="ACL07956.1"/>
    <property type="molecule type" value="Genomic_DNA"/>
</dbReference>
<dbReference type="SMR" id="B8DPP9"/>
<dbReference type="STRING" id="883.DvMF_1001"/>
<dbReference type="KEGG" id="dvm:DvMF_1001"/>
<dbReference type="eggNOG" id="COG0502">
    <property type="taxonomic scope" value="Bacteria"/>
</dbReference>
<dbReference type="HOGENOM" id="CLU_033172_2_1_7"/>
<dbReference type="OrthoDB" id="9786826at2"/>
<dbReference type="UniPathway" id="UPA00078">
    <property type="reaction ID" value="UER00162"/>
</dbReference>
<dbReference type="GO" id="GO:0051537">
    <property type="term" value="F:2 iron, 2 sulfur cluster binding"/>
    <property type="evidence" value="ECO:0007669"/>
    <property type="project" value="UniProtKB-KW"/>
</dbReference>
<dbReference type="GO" id="GO:0051539">
    <property type="term" value="F:4 iron, 4 sulfur cluster binding"/>
    <property type="evidence" value="ECO:0007669"/>
    <property type="project" value="UniProtKB-KW"/>
</dbReference>
<dbReference type="GO" id="GO:0004076">
    <property type="term" value="F:biotin synthase activity"/>
    <property type="evidence" value="ECO:0007669"/>
    <property type="project" value="UniProtKB-UniRule"/>
</dbReference>
<dbReference type="GO" id="GO:0005506">
    <property type="term" value="F:iron ion binding"/>
    <property type="evidence" value="ECO:0007669"/>
    <property type="project" value="UniProtKB-UniRule"/>
</dbReference>
<dbReference type="GO" id="GO:0009102">
    <property type="term" value="P:biotin biosynthetic process"/>
    <property type="evidence" value="ECO:0007669"/>
    <property type="project" value="UniProtKB-UniRule"/>
</dbReference>
<dbReference type="CDD" id="cd01335">
    <property type="entry name" value="Radical_SAM"/>
    <property type="match status" value="1"/>
</dbReference>
<dbReference type="Gene3D" id="3.20.20.70">
    <property type="entry name" value="Aldolase class I"/>
    <property type="match status" value="1"/>
</dbReference>
<dbReference type="HAMAP" id="MF_01694">
    <property type="entry name" value="BioB"/>
    <property type="match status" value="1"/>
</dbReference>
<dbReference type="InterPro" id="IPR013785">
    <property type="entry name" value="Aldolase_TIM"/>
</dbReference>
<dbReference type="InterPro" id="IPR010722">
    <property type="entry name" value="BATS_dom"/>
</dbReference>
<dbReference type="InterPro" id="IPR002684">
    <property type="entry name" value="Biotin_synth/BioAB"/>
</dbReference>
<dbReference type="InterPro" id="IPR024177">
    <property type="entry name" value="Biotin_synthase"/>
</dbReference>
<dbReference type="InterPro" id="IPR006638">
    <property type="entry name" value="Elp3/MiaA/NifB-like_rSAM"/>
</dbReference>
<dbReference type="InterPro" id="IPR007197">
    <property type="entry name" value="rSAM"/>
</dbReference>
<dbReference type="NCBIfam" id="TIGR00433">
    <property type="entry name" value="bioB"/>
    <property type="match status" value="1"/>
</dbReference>
<dbReference type="PANTHER" id="PTHR22976">
    <property type="entry name" value="BIOTIN SYNTHASE"/>
    <property type="match status" value="1"/>
</dbReference>
<dbReference type="PANTHER" id="PTHR22976:SF2">
    <property type="entry name" value="BIOTIN SYNTHASE, MITOCHONDRIAL"/>
    <property type="match status" value="1"/>
</dbReference>
<dbReference type="Pfam" id="PF06968">
    <property type="entry name" value="BATS"/>
    <property type="match status" value="1"/>
</dbReference>
<dbReference type="Pfam" id="PF04055">
    <property type="entry name" value="Radical_SAM"/>
    <property type="match status" value="1"/>
</dbReference>
<dbReference type="PIRSF" id="PIRSF001619">
    <property type="entry name" value="Biotin_synth"/>
    <property type="match status" value="1"/>
</dbReference>
<dbReference type="SFLD" id="SFLDG01060">
    <property type="entry name" value="BATS_domain_containing"/>
    <property type="match status" value="1"/>
</dbReference>
<dbReference type="SFLD" id="SFLDG01278">
    <property type="entry name" value="biotin_synthase_like"/>
    <property type="match status" value="1"/>
</dbReference>
<dbReference type="SMART" id="SM00876">
    <property type="entry name" value="BATS"/>
    <property type="match status" value="1"/>
</dbReference>
<dbReference type="SMART" id="SM00729">
    <property type="entry name" value="Elp3"/>
    <property type="match status" value="1"/>
</dbReference>
<dbReference type="SUPFAM" id="SSF102114">
    <property type="entry name" value="Radical SAM enzymes"/>
    <property type="match status" value="1"/>
</dbReference>
<dbReference type="PROSITE" id="PS51918">
    <property type="entry name" value="RADICAL_SAM"/>
    <property type="match status" value="1"/>
</dbReference>
<organism>
    <name type="scientific">Nitratidesulfovibrio vulgaris (strain DSM 19637 / Miyazaki F)</name>
    <name type="common">Desulfovibrio vulgaris</name>
    <dbReference type="NCBI Taxonomy" id="883"/>
    <lineage>
        <taxon>Bacteria</taxon>
        <taxon>Pseudomonadati</taxon>
        <taxon>Thermodesulfobacteriota</taxon>
        <taxon>Desulfovibrionia</taxon>
        <taxon>Desulfovibrionales</taxon>
        <taxon>Desulfovibrionaceae</taxon>
        <taxon>Nitratidesulfovibrio</taxon>
    </lineage>
</organism>
<gene>
    <name evidence="1" type="primary">bioB</name>
    <name type="ordered locus">DvMF_1001</name>
</gene>
<comment type="function">
    <text evidence="1">Catalyzes the conversion of dethiobiotin (DTB) to biotin by the insertion of a sulfur atom into dethiobiotin via a radical-based mechanism.</text>
</comment>
<comment type="catalytic activity">
    <reaction evidence="1">
        <text>(4R,5S)-dethiobiotin + (sulfur carrier)-SH + 2 reduced [2Fe-2S]-[ferredoxin] + 2 S-adenosyl-L-methionine = (sulfur carrier)-H + biotin + 2 5'-deoxyadenosine + 2 L-methionine + 2 oxidized [2Fe-2S]-[ferredoxin]</text>
        <dbReference type="Rhea" id="RHEA:22060"/>
        <dbReference type="Rhea" id="RHEA-COMP:10000"/>
        <dbReference type="Rhea" id="RHEA-COMP:10001"/>
        <dbReference type="Rhea" id="RHEA-COMP:14737"/>
        <dbReference type="Rhea" id="RHEA-COMP:14739"/>
        <dbReference type="ChEBI" id="CHEBI:17319"/>
        <dbReference type="ChEBI" id="CHEBI:29917"/>
        <dbReference type="ChEBI" id="CHEBI:33737"/>
        <dbReference type="ChEBI" id="CHEBI:33738"/>
        <dbReference type="ChEBI" id="CHEBI:57586"/>
        <dbReference type="ChEBI" id="CHEBI:57844"/>
        <dbReference type="ChEBI" id="CHEBI:59789"/>
        <dbReference type="ChEBI" id="CHEBI:64428"/>
        <dbReference type="ChEBI" id="CHEBI:149473"/>
        <dbReference type="EC" id="2.8.1.6"/>
    </reaction>
</comment>
<comment type="cofactor">
    <cofactor evidence="1">
        <name>[4Fe-4S] cluster</name>
        <dbReference type="ChEBI" id="CHEBI:49883"/>
    </cofactor>
    <text evidence="1">Binds 1 [4Fe-4S] cluster. The cluster is coordinated with 3 cysteines and an exchangeable S-adenosyl-L-methionine.</text>
</comment>
<comment type="cofactor">
    <cofactor evidence="1">
        <name>[2Fe-2S] cluster</name>
        <dbReference type="ChEBI" id="CHEBI:190135"/>
    </cofactor>
    <text evidence="1">Binds 1 [2Fe-2S] cluster. The cluster is coordinated with 3 cysteines and 1 arginine.</text>
</comment>
<comment type="pathway">
    <text evidence="1">Cofactor biosynthesis; biotin biosynthesis; biotin from 7,8-diaminononanoate: step 2/2.</text>
</comment>
<comment type="subunit">
    <text evidence="1">Homodimer.</text>
</comment>
<comment type="similarity">
    <text evidence="1">Belongs to the radical SAM superfamily. Biotin synthase family.</text>
</comment>
<reference key="1">
    <citation type="submission" date="2008-10" db="EMBL/GenBank/DDBJ databases">
        <title>Complete sequence of Desulfovibrio vulgaris str. 'Miyazaki F'.</title>
        <authorList>
            <person name="Lucas S."/>
            <person name="Copeland A."/>
            <person name="Lapidus A."/>
            <person name="Glavina del Rio T."/>
            <person name="Dalin E."/>
            <person name="Tice H."/>
            <person name="Bruce D."/>
            <person name="Goodwin L."/>
            <person name="Pitluck S."/>
            <person name="Sims D."/>
            <person name="Brettin T."/>
            <person name="Detter J.C."/>
            <person name="Han C."/>
            <person name="Larimer F."/>
            <person name="Land M."/>
            <person name="Hauser L."/>
            <person name="Kyrpides N."/>
            <person name="Mikhailova N."/>
            <person name="Hazen T.C."/>
            <person name="Richardson P."/>
        </authorList>
    </citation>
    <scope>NUCLEOTIDE SEQUENCE [LARGE SCALE GENOMIC DNA]</scope>
    <source>
        <strain>DSM 19637 / Miyazaki F</strain>
    </source>
</reference>
<accession>B8DPP9</accession>
<proteinExistence type="inferred from homology"/>
<keyword id="KW-0001">2Fe-2S</keyword>
<keyword id="KW-0004">4Fe-4S</keyword>
<keyword id="KW-0093">Biotin biosynthesis</keyword>
<keyword id="KW-0408">Iron</keyword>
<keyword id="KW-0411">Iron-sulfur</keyword>
<keyword id="KW-0479">Metal-binding</keyword>
<keyword id="KW-0949">S-adenosyl-L-methionine</keyword>
<keyword id="KW-0808">Transferase</keyword>
<protein>
    <recommendedName>
        <fullName evidence="1">Biotin synthase</fullName>
        <ecNumber evidence="1">2.8.1.6</ecNumber>
    </recommendedName>
</protein>
<evidence type="ECO:0000255" key="1">
    <source>
        <dbReference type="HAMAP-Rule" id="MF_01694"/>
    </source>
</evidence>
<evidence type="ECO:0000255" key="2">
    <source>
        <dbReference type="PROSITE-ProRule" id="PRU01266"/>
    </source>
</evidence>
<evidence type="ECO:0000256" key="3">
    <source>
        <dbReference type="SAM" id="MobiDB-lite"/>
    </source>
</evidence>